<dbReference type="EC" id="3.6.1.27" evidence="1"/>
<dbReference type="EMBL" id="CP000485">
    <property type="protein sequence ID" value="ABK83676.1"/>
    <property type="molecule type" value="Genomic_DNA"/>
</dbReference>
<dbReference type="RefSeq" id="WP_001279962.1">
    <property type="nucleotide sequence ID" value="NC_008600.1"/>
</dbReference>
<dbReference type="SMR" id="A0R8Y3"/>
<dbReference type="KEGG" id="btl:BALH_0274"/>
<dbReference type="HOGENOM" id="CLU_060296_2_0_9"/>
<dbReference type="GO" id="GO:0005886">
    <property type="term" value="C:plasma membrane"/>
    <property type="evidence" value="ECO:0007669"/>
    <property type="project" value="UniProtKB-SubCell"/>
</dbReference>
<dbReference type="GO" id="GO:0050380">
    <property type="term" value="F:undecaprenyl-diphosphatase activity"/>
    <property type="evidence" value="ECO:0007669"/>
    <property type="project" value="UniProtKB-UniRule"/>
</dbReference>
<dbReference type="GO" id="GO:0071555">
    <property type="term" value="P:cell wall organization"/>
    <property type="evidence" value="ECO:0007669"/>
    <property type="project" value="UniProtKB-KW"/>
</dbReference>
<dbReference type="GO" id="GO:0009252">
    <property type="term" value="P:peptidoglycan biosynthetic process"/>
    <property type="evidence" value="ECO:0007669"/>
    <property type="project" value="UniProtKB-KW"/>
</dbReference>
<dbReference type="GO" id="GO:0008360">
    <property type="term" value="P:regulation of cell shape"/>
    <property type="evidence" value="ECO:0007669"/>
    <property type="project" value="UniProtKB-KW"/>
</dbReference>
<dbReference type="GO" id="GO:0046677">
    <property type="term" value="P:response to antibiotic"/>
    <property type="evidence" value="ECO:0007669"/>
    <property type="project" value="UniProtKB-UniRule"/>
</dbReference>
<dbReference type="HAMAP" id="MF_01006">
    <property type="entry name" value="Undec_diphosphatase"/>
    <property type="match status" value="1"/>
</dbReference>
<dbReference type="InterPro" id="IPR003824">
    <property type="entry name" value="UppP"/>
</dbReference>
<dbReference type="NCBIfam" id="NF001388">
    <property type="entry name" value="PRK00281.1-1"/>
    <property type="match status" value="1"/>
</dbReference>
<dbReference type="NCBIfam" id="NF001389">
    <property type="entry name" value="PRK00281.1-2"/>
    <property type="match status" value="1"/>
</dbReference>
<dbReference type="NCBIfam" id="NF001390">
    <property type="entry name" value="PRK00281.1-4"/>
    <property type="match status" value="1"/>
</dbReference>
<dbReference type="NCBIfam" id="TIGR00753">
    <property type="entry name" value="undec_PP_bacA"/>
    <property type="match status" value="1"/>
</dbReference>
<dbReference type="PANTHER" id="PTHR30622">
    <property type="entry name" value="UNDECAPRENYL-DIPHOSPHATASE"/>
    <property type="match status" value="1"/>
</dbReference>
<dbReference type="PANTHER" id="PTHR30622:SF3">
    <property type="entry name" value="UNDECAPRENYL-DIPHOSPHATASE"/>
    <property type="match status" value="1"/>
</dbReference>
<dbReference type="Pfam" id="PF02673">
    <property type="entry name" value="BacA"/>
    <property type="match status" value="1"/>
</dbReference>
<comment type="function">
    <text evidence="1">Catalyzes the dephosphorylation of undecaprenyl diphosphate (UPP). Confers resistance to bacitracin.</text>
</comment>
<comment type="catalytic activity">
    <reaction evidence="1">
        <text>di-trans,octa-cis-undecaprenyl diphosphate + H2O = di-trans,octa-cis-undecaprenyl phosphate + phosphate + H(+)</text>
        <dbReference type="Rhea" id="RHEA:28094"/>
        <dbReference type="ChEBI" id="CHEBI:15377"/>
        <dbReference type="ChEBI" id="CHEBI:15378"/>
        <dbReference type="ChEBI" id="CHEBI:43474"/>
        <dbReference type="ChEBI" id="CHEBI:58405"/>
        <dbReference type="ChEBI" id="CHEBI:60392"/>
        <dbReference type="EC" id="3.6.1.27"/>
    </reaction>
</comment>
<comment type="subcellular location">
    <subcellularLocation>
        <location evidence="1">Cell membrane</location>
        <topology evidence="1">Multi-pass membrane protein</topology>
    </subcellularLocation>
</comment>
<comment type="miscellaneous">
    <text>Bacitracin is thought to be involved in the inhibition of peptidoglycan synthesis by sequestering undecaprenyl diphosphate, thereby reducing the pool of lipid carrier available.</text>
</comment>
<comment type="similarity">
    <text evidence="1">Belongs to the UppP family.</text>
</comment>
<name>UPPP1_BACAH</name>
<sequence length="265" mass="29044">MSDIIIAFILGIVEGLAEFLPISSTGHLILVGHLLGFEGERAKTFEIVIQLGAILAIAILYHKRLVSLCNIKPLLRKEKKFNAFHVFLGVFPAVVAGLLLHDVIKTYLFQPYTVVIGLVAGAILMIFAEVKKQEATSYSLDDLTYRQALTIGLFQCLAVYPGFSRAGSTISGGLLAKVNYKTASEFSFLIALPVMVGATGLDLLKSWTYLSVDDIPMFAVGFITSFIVAMLAVVTFLKLLEKIGLKPFAYYRILLAILFTVFVLL</sequence>
<protein>
    <recommendedName>
        <fullName evidence="1">Undecaprenyl-diphosphatase 1</fullName>
        <ecNumber evidence="1">3.6.1.27</ecNumber>
    </recommendedName>
    <alternativeName>
        <fullName evidence="1">Bacitracin resistance protein 1</fullName>
    </alternativeName>
    <alternativeName>
        <fullName evidence="1">Undecaprenyl pyrophosphate phosphatase 1</fullName>
    </alternativeName>
</protein>
<proteinExistence type="inferred from homology"/>
<gene>
    <name evidence="1" type="primary">uppP1</name>
    <name type="synonym">bacA</name>
    <name type="ordered locus">BALH_0274</name>
</gene>
<keyword id="KW-0046">Antibiotic resistance</keyword>
<keyword id="KW-1003">Cell membrane</keyword>
<keyword id="KW-0133">Cell shape</keyword>
<keyword id="KW-0961">Cell wall biogenesis/degradation</keyword>
<keyword id="KW-0378">Hydrolase</keyword>
<keyword id="KW-0472">Membrane</keyword>
<keyword id="KW-0573">Peptidoglycan synthesis</keyword>
<keyword id="KW-0812">Transmembrane</keyword>
<keyword id="KW-1133">Transmembrane helix</keyword>
<feature type="chain" id="PRO_0000290684" description="Undecaprenyl-diphosphatase 1">
    <location>
        <begin position="1"/>
        <end position="265"/>
    </location>
</feature>
<feature type="transmembrane region" description="Helical" evidence="1">
    <location>
        <begin position="4"/>
        <end position="24"/>
    </location>
</feature>
<feature type="transmembrane region" description="Helical" evidence="1">
    <location>
        <begin position="42"/>
        <end position="62"/>
    </location>
</feature>
<feature type="transmembrane region" description="Helical" evidence="1">
    <location>
        <begin position="84"/>
        <end position="104"/>
    </location>
</feature>
<feature type="transmembrane region" description="Helical" evidence="1">
    <location>
        <begin position="108"/>
        <end position="128"/>
    </location>
</feature>
<feature type="transmembrane region" description="Helical" evidence="1">
    <location>
        <begin position="184"/>
        <end position="204"/>
    </location>
</feature>
<feature type="transmembrane region" description="Helical" evidence="1">
    <location>
        <begin position="217"/>
        <end position="237"/>
    </location>
</feature>
<feature type="transmembrane region" description="Helical" evidence="1">
    <location>
        <begin position="245"/>
        <end position="265"/>
    </location>
</feature>
<accession>A0R8Y3</accession>
<organism>
    <name type="scientific">Bacillus thuringiensis (strain Al Hakam)</name>
    <dbReference type="NCBI Taxonomy" id="412694"/>
    <lineage>
        <taxon>Bacteria</taxon>
        <taxon>Bacillati</taxon>
        <taxon>Bacillota</taxon>
        <taxon>Bacilli</taxon>
        <taxon>Bacillales</taxon>
        <taxon>Bacillaceae</taxon>
        <taxon>Bacillus</taxon>
        <taxon>Bacillus cereus group</taxon>
    </lineage>
</organism>
<evidence type="ECO:0000255" key="1">
    <source>
        <dbReference type="HAMAP-Rule" id="MF_01006"/>
    </source>
</evidence>
<reference key="1">
    <citation type="journal article" date="2007" name="J. Bacteriol.">
        <title>The complete genome sequence of Bacillus thuringiensis Al Hakam.</title>
        <authorList>
            <person name="Challacombe J.F."/>
            <person name="Altherr M.R."/>
            <person name="Xie G."/>
            <person name="Bhotika S.S."/>
            <person name="Brown N."/>
            <person name="Bruce D."/>
            <person name="Campbell C.S."/>
            <person name="Campbell M.L."/>
            <person name="Chen J."/>
            <person name="Chertkov O."/>
            <person name="Cleland C."/>
            <person name="Dimitrijevic M."/>
            <person name="Doggett N.A."/>
            <person name="Fawcett J.J."/>
            <person name="Glavina T."/>
            <person name="Goodwin L.A."/>
            <person name="Green L.D."/>
            <person name="Han C.S."/>
            <person name="Hill K.K."/>
            <person name="Hitchcock P."/>
            <person name="Jackson P.J."/>
            <person name="Keim P."/>
            <person name="Kewalramani A.R."/>
            <person name="Longmire J."/>
            <person name="Lucas S."/>
            <person name="Malfatti S."/>
            <person name="Martinez D."/>
            <person name="McMurry K."/>
            <person name="Meincke L.J."/>
            <person name="Misra M."/>
            <person name="Moseman B.L."/>
            <person name="Mundt M."/>
            <person name="Munk A.C."/>
            <person name="Okinaka R.T."/>
            <person name="Parson-Quintana B."/>
            <person name="Reilly L.P."/>
            <person name="Richardson P."/>
            <person name="Robinson D.L."/>
            <person name="Saunders E."/>
            <person name="Tapia R."/>
            <person name="Tesmer J.G."/>
            <person name="Thayer N."/>
            <person name="Thompson L.S."/>
            <person name="Tice H."/>
            <person name="Ticknor L.O."/>
            <person name="Wills P.L."/>
            <person name="Gilna P."/>
            <person name="Brettin T.S."/>
        </authorList>
    </citation>
    <scope>NUCLEOTIDE SEQUENCE [LARGE SCALE GENOMIC DNA]</scope>
    <source>
        <strain>Al Hakam</strain>
    </source>
</reference>